<gene>
    <name evidence="4" type="primary">Bag6-b</name>
    <name evidence="4" type="synonym">bat3-b</name>
</gene>
<name>BAG6B_XENLA</name>
<proteinExistence type="evidence at transcript level"/>
<comment type="function">
    <text evidence="1">ATP-independent molecular chaperone preventing the aggregation of misfolded and hydrophobic patches-containing proteins. Functions as part of a cytosolic protein quality control complex, the bag6/bat3 complex, which maintains these client proteins in a soluble state and participates in their proper delivery to the endoplasmic reticulum or alternatively can promote their sorting to the proteasome where they undergo degradation. The bag6/bat3 complex is involved in the post-translational delivery of tail-anchored/type II transmembrane proteins to the endoplasmic reticulum membrane. Similarly, the bag6/bat3 complex also functions as a sorting platform for proteins of the secretory pathway that are mislocalized to the cytosol either delivering them to the proteasome for degradation or to the endoplasmic reticulum. The bag6/bat3 complex also plays a role in the endoplasmic reticulum-associated degradation (ERAD), a quality control mechanism that eliminates unwanted proteins of the endoplasmic reticulum through their retrotranslocation to the cytosol and their targeting to the proteasome. It maintains these retrotranslocated proteins in an unfolded yet soluble state condition in the cytosol to ensure their proper delivery to the proteasome. Also required for selective ubiquitin-mediated degradation of defective nascent chain polypeptides by the proteasome. Also involved in endoplasmic reticulum stress-induced pre-emptive quality control, a mechanism that selectively attenuates the translocation of newly synthesized proteins into the endoplasmic reticulum and reroutes them to the cytosol for proteasomal degradation. May ensure the proper degradation of these proteins and thereby protects the endoplasmic reticulum from protein overload upon stress. By stabilizing a large spectrum of proteins, may indirectly affect different biological processes including apoptosis. By controlling the steady-state expression of the IGF1R receptor, indirectly regulates the insulin-like growth factor receptor signaling pathway.</text>
</comment>
<comment type="function">
    <text evidence="1">When nuclear, may also act as a component of some chromatin regulator complex.</text>
</comment>
<comment type="subunit">
    <text evidence="1">Component of the bag6/bat3 complex.</text>
</comment>
<comment type="subcellular location">
    <subcellularLocation>
        <location evidence="1">Cytoplasm</location>
        <location evidence="1">Cytosol</location>
    </subcellularLocation>
    <subcellularLocation>
        <location evidence="1">Nucleus</location>
    </subcellularLocation>
    <subcellularLocation>
        <location evidence="1">Secreted</location>
        <location evidence="1">Extracellular exosome</location>
    </subcellularLocation>
</comment>
<evidence type="ECO:0000250" key="1">
    <source>
        <dbReference type="UniProtKB" id="P46379"/>
    </source>
</evidence>
<evidence type="ECO:0000255" key="2">
    <source>
        <dbReference type="PROSITE-ProRule" id="PRU00214"/>
    </source>
</evidence>
<evidence type="ECO:0000256" key="3">
    <source>
        <dbReference type="SAM" id="MobiDB-lite"/>
    </source>
</evidence>
<evidence type="ECO:0000305" key="4"/>
<organism>
    <name type="scientific">Xenopus laevis</name>
    <name type="common">African clawed frog</name>
    <dbReference type="NCBI Taxonomy" id="8355"/>
    <lineage>
        <taxon>Eukaryota</taxon>
        <taxon>Metazoa</taxon>
        <taxon>Chordata</taxon>
        <taxon>Craniata</taxon>
        <taxon>Vertebrata</taxon>
        <taxon>Euteleostomi</taxon>
        <taxon>Amphibia</taxon>
        <taxon>Batrachia</taxon>
        <taxon>Anura</taxon>
        <taxon>Pipoidea</taxon>
        <taxon>Pipidae</taxon>
        <taxon>Xenopodinae</taxon>
        <taxon>Xenopus</taxon>
        <taxon>Xenopus</taxon>
    </lineage>
</organism>
<sequence length="1116" mass="119354">MAANEKMDVTVKTLDSQTRTFTVEAEILVKEFKAHISSAVGITPEKQRLIYQGRVLQEDKKLNEYNVDGKVIHLVERAPPQTQTSTSGPSTSSSTSPSSSNAAPVPGAPERNGNSYVMVGTFNLPHVMSGLGEASRGPSVSTISGSEPRVRLVLAQNILQDIQRNLDRLEGQPGNEQAAEPMDTAESEGEASSRETLPQTTQNADGQSNSTPTSHPSPSEYVEVLQSLSRVEERLAPFMQRYREILSSATSDTYENQEREQSQRIINLVGESLRLLGNALVAVSDLRCNLSSASPRHLHVVRPMSHYSGPMLLQQAAIPIQINVGTTVSTTGNGTHAGHVPSDGNATPSTNTSEHQRSNSENQPPPSGERPASDAPPNSVPHPHPRVIRITHQTVEPVMMMHMNIQDSASGGPTNIPPPTAGHGGSAHIHMPGLPPEFMQAISNQITQQAMAAASGQQIPGFQAPPRFVFTRPAAPSFNFQPGAAATTPPAPGGATTTAPGATVGPAGNASLAQMISGLVGQLLMHPVVVAQGGSSTSSTTSTSTSTSTSSSTSSSSSTVPTSTTTTTSTSFPNVSSVPSAQLPPGTDQHLSQLLGSLLGTASSGMSNLTMGSPSITVTVPGMPAFLQGVTDILQATQTVPVSTSPPQSASQAPPPPSSPAPPAHSAPPPAAAPESLPPEFFTSVVQGVLSSMLGSLSAADQSGTESIADFIQRLSGSHNIFQPDAEGPGGFFGDLLTLICHNFSLVDMVMLLHGHSQPLQNLQPQLRSFFLQEYLHQADPTPNNIQMASRNLTNGLEEYIRESFASVTVRDDVDITRTNLEFLQDQFNRITTHILHCADSTFGQRLLEMCNQSLFEWLALNLYCLRGDQNALTSVINERIRRLSLDVSPVLVSWVTSVLSLRLQVLLGQMPVTEGEIQRHVRRVGDASQVPEPSSQEQPMETMPVDFQQNGAASPVPATTVEEVLFLPPQSSVPTICPDSEHPTQGDSVSEQWTASVPPEWVPVIRQDLQNQRKIKQQPPLSDAYLSGMPAKRRKTMQGEGPHLSLSEAVSRAMKVTGAKPESSTECVKRELDNSEAQGEYKEQLCQDIQEILQDDESYTAQRFPNTHRAFRGDP</sequence>
<protein>
    <recommendedName>
        <fullName evidence="4">Large proline-rich protein bag6-B</fullName>
    </recommendedName>
    <alternativeName>
        <fullName evidence="1">BCL2-associated athanogene 6</fullName>
    </alternativeName>
    <alternativeName>
        <fullName evidence="4">HLA-B-associated transcript 3-B</fullName>
    </alternativeName>
</protein>
<keyword id="KW-0053">Apoptosis</keyword>
<keyword id="KW-0143">Chaperone</keyword>
<keyword id="KW-0156">Chromatin regulator</keyword>
<keyword id="KW-0963">Cytoplasm</keyword>
<keyword id="KW-0539">Nucleus</keyword>
<keyword id="KW-1185">Reference proteome</keyword>
<keyword id="KW-0964">Secreted</keyword>
<keyword id="KW-0813">Transport</keyword>
<dbReference type="EMBL" id="BC060479">
    <property type="protein sequence ID" value="AAH60479.1"/>
    <property type="molecule type" value="mRNA"/>
</dbReference>
<dbReference type="RefSeq" id="NP_001083439.1">
    <property type="nucleotide sequence ID" value="NM_001089970.1"/>
</dbReference>
<dbReference type="SMR" id="Q6PA26"/>
<dbReference type="DNASU" id="398926"/>
<dbReference type="GeneID" id="398926"/>
<dbReference type="KEGG" id="xla:398926"/>
<dbReference type="AGR" id="Xenbase:XB-GENE-865204"/>
<dbReference type="CTD" id="398926"/>
<dbReference type="Xenbase" id="XB-GENE-865204">
    <property type="gene designation" value="bag6.S"/>
</dbReference>
<dbReference type="OrthoDB" id="1885901at2759"/>
<dbReference type="Proteomes" id="UP000186698">
    <property type="component" value="Chromosome 8S"/>
</dbReference>
<dbReference type="Bgee" id="398926">
    <property type="expression patterns" value="Expressed in testis and 19 other cell types or tissues"/>
</dbReference>
<dbReference type="GO" id="GO:0071818">
    <property type="term" value="C:BAT3 complex"/>
    <property type="evidence" value="ECO:0000250"/>
    <property type="project" value="UniProtKB"/>
</dbReference>
<dbReference type="GO" id="GO:0005829">
    <property type="term" value="C:cytosol"/>
    <property type="evidence" value="ECO:0000250"/>
    <property type="project" value="UniProtKB"/>
</dbReference>
<dbReference type="GO" id="GO:0005576">
    <property type="term" value="C:extracellular region"/>
    <property type="evidence" value="ECO:0007669"/>
    <property type="project" value="UniProtKB-SubCell"/>
</dbReference>
<dbReference type="GO" id="GO:0005634">
    <property type="term" value="C:nucleus"/>
    <property type="evidence" value="ECO:0000250"/>
    <property type="project" value="UniProtKB"/>
</dbReference>
<dbReference type="GO" id="GO:0051787">
    <property type="term" value="F:misfolded protein binding"/>
    <property type="evidence" value="ECO:0000318"/>
    <property type="project" value="GO_Central"/>
</dbReference>
<dbReference type="GO" id="GO:0031593">
    <property type="term" value="F:polyubiquitin modification-dependent protein binding"/>
    <property type="evidence" value="ECO:0000250"/>
    <property type="project" value="UniProtKB"/>
</dbReference>
<dbReference type="GO" id="GO:0070628">
    <property type="term" value="F:proteasome binding"/>
    <property type="evidence" value="ECO:0000250"/>
    <property type="project" value="UniProtKB"/>
</dbReference>
<dbReference type="GO" id="GO:0043022">
    <property type="term" value="F:ribosome binding"/>
    <property type="evidence" value="ECO:0000250"/>
    <property type="project" value="UniProtKB"/>
</dbReference>
<dbReference type="GO" id="GO:0007420">
    <property type="term" value="P:brain development"/>
    <property type="evidence" value="ECO:0000250"/>
    <property type="project" value="UniProtKB"/>
</dbReference>
<dbReference type="GO" id="GO:0006325">
    <property type="term" value="P:chromatin organization"/>
    <property type="evidence" value="ECO:0007669"/>
    <property type="project" value="UniProtKB-KW"/>
</dbReference>
<dbReference type="GO" id="GO:0061857">
    <property type="term" value="P:endoplasmic reticulum stress-induced pre-emptive quality control"/>
    <property type="evidence" value="ECO:0000250"/>
    <property type="project" value="UniProtKB"/>
</dbReference>
<dbReference type="GO" id="GO:0036503">
    <property type="term" value="P:ERAD pathway"/>
    <property type="evidence" value="ECO:0000250"/>
    <property type="project" value="UniProtKB"/>
</dbReference>
<dbReference type="GO" id="GO:0018393">
    <property type="term" value="P:internal peptidyl-lysine acetylation"/>
    <property type="evidence" value="ECO:0000250"/>
    <property type="project" value="UniProtKB"/>
</dbReference>
<dbReference type="GO" id="GO:0042771">
    <property type="term" value="P:intrinsic apoptotic signaling pathway in response to DNA damage by p53 class mediator"/>
    <property type="evidence" value="ECO:0000250"/>
    <property type="project" value="UniProtKB"/>
</dbReference>
<dbReference type="GO" id="GO:0070059">
    <property type="term" value="P:intrinsic apoptotic signaling pathway in response to endoplasmic reticulum stress"/>
    <property type="evidence" value="ECO:0000250"/>
    <property type="project" value="UniProtKB"/>
</dbReference>
<dbReference type="GO" id="GO:0001822">
    <property type="term" value="P:kidney development"/>
    <property type="evidence" value="ECO:0000250"/>
    <property type="project" value="UniProtKB"/>
</dbReference>
<dbReference type="GO" id="GO:0030324">
    <property type="term" value="P:lung development"/>
    <property type="evidence" value="ECO:0000250"/>
    <property type="project" value="UniProtKB"/>
</dbReference>
<dbReference type="GO" id="GO:0032435">
    <property type="term" value="P:negative regulation of proteasomal ubiquitin-dependent protein catabolic process"/>
    <property type="evidence" value="ECO:0000250"/>
    <property type="project" value="UniProtKB"/>
</dbReference>
<dbReference type="GO" id="GO:0045861">
    <property type="term" value="P:negative regulation of proteolysis"/>
    <property type="evidence" value="ECO:0000250"/>
    <property type="project" value="UniProtKB"/>
</dbReference>
<dbReference type="GO" id="GO:0010498">
    <property type="term" value="P:proteasomal protein catabolic process"/>
    <property type="evidence" value="ECO:0000250"/>
    <property type="project" value="UniProtKB"/>
</dbReference>
<dbReference type="GO" id="GO:0050821">
    <property type="term" value="P:protein stabilization"/>
    <property type="evidence" value="ECO:0000250"/>
    <property type="project" value="UniProtKB"/>
</dbReference>
<dbReference type="GO" id="GO:0045995">
    <property type="term" value="P:regulation of embryonic development"/>
    <property type="evidence" value="ECO:0000250"/>
    <property type="project" value="UniProtKB"/>
</dbReference>
<dbReference type="GO" id="GO:0007283">
    <property type="term" value="P:spermatogenesis"/>
    <property type="evidence" value="ECO:0000250"/>
    <property type="project" value="UniProtKB"/>
</dbReference>
<dbReference type="GO" id="GO:0007130">
    <property type="term" value="P:synaptonemal complex assembly"/>
    <property type="evidence" value="ECO:0000250"/>
    <property type="project" value="UniProtKB"/>
</dbReference>
<dbReference type="GO" id="GO:0071816">
    <property type="term" value="P:tail-anchored membrane protein insertion into ER membrane"/>
    <property type="evidence" value="ECO:0000250"/>
    <property type="project" value="UniProtKB"/>
</dbReference>
<dbReference type="GO" id="GO:0006511">
    <property type="term" value="P:ubiquitin-dependent protein catabolic process"/>
    <property type="evidence" value="ECO:0000250"/>
    <property type="project" value="UniProtKB"/>
</dbReference>
<dbReference type="CDD" id="cd01809">
    <property type="entry name" value="Ubl_BAG6"/>
    <property type="match status" value="1"/>
</dbReference>
<dbReference type="FunFam" id="3.10.20.90:FF:000041">
    <property type="entry name" value="large proline-rich protein BAG6 isoform X1"/>
    <property type="match status" value="1"/>
</dbReference>
<dbReference type="Gene3D" id="3.10.20.90">
    <property type="entry name" value="Phosphatidylinositol 3-kinase Catalytic Subunit, Chain A, domain 1"/>
    <property type="match status" value="1"/>
</dbReference>
<dbReference type="InterPro" id="IPR021925">
    <property type="entry name" value="BAG6"/>
</dbReference>
<dbReference type="InterPro" id="IPR048926">
    <property type="entry name" value="Bag6_BAGS"/>
</dbReference>
<dbReference type="InterPro" id="IPR000626">
    <property type="entry name" value="Ubiquitin-like_dom"/>
</dbReference>
<dbReference type="InterPro" id="IPR029071">
    <property type="entry name" value="Ubiquitin-like_domsf"/>
</dbReference>
<dbReference type="PANTHER" id="PTHR15204">
    <property type="entry name" value="LARGE PROLINE-RICH PROTEIN BAG6"/>
    <property type="match status" value="1"/>
</dbReference>
<dbReference type="PANTHER" id="PTHR15204:SF0">
    <property type="entry name" value="LARGE PROLINE-RICH PROTEIN BAG6"/>
    <property type="match status" value="1"/>
</dbReference>
<dbReference type="Pfam" id="PF12057">
    <property type="entry name" value="BAG6"/>
    <property type="match status" value="1"/>
</dbReference>
<dbReference type="Pfam" id="PF20960">
    <property type="entry name" value="Bag6_BAGS"/>
    <property type="match status" value="1"/>
</dbReference>
<dbReference type="Pfam" id="PF00240">
    <property type="entry name" value="ubiquitin"/>
    <property type="match status" value="1"/>
</dbReference>
<dbReference type="SMART" id="SM00213">
    <property type="entry name" value="UBQ"/>
    <property type="match status" value="1"/>
</dbReference>
<dbReference type="SUPFAM" id="SSF54236">
    <property type="entry name" value="Ubiquitin-like"/>
    <property type="match status" value="1"/>
</dbReference>
<dbReference type="PROSITE" id="PS50053">
    <property type="entry name" value="UBIQUITIN_2"/>
    <property type="match status" value="1"/>
</dbReference>
<accession>Q6PA26</accession>
<reference key="1">
    <citation type="submission" date="2003-10" db="EMBL/GenBank/DDBJ databases">
        <authorList>
            <consortium name="NIH - Xenopus Gene Collection (XGC) project"/>
        </authorList>
    </citation>
    <scope>NUCLEOTIDE SEQUENCE [LARGE SCALE MRNA]</scope>
    <source>
        <tissue>Lung</tissue>
    </source>
</reference>
<feature type="chain" id="PRO_0000403754" description="Large proline-rich protein bag6-B">
    <location>
        <begin position="1"/>
        <end position="1116"/>
    </location>
</feature>
<feature type="domain" description="Ubiquitin-like" evidence="2">
    <location>
        <begin position="7"/>
        <end position="82"/>
    </location>
</feature>
<feature type="region of interest" description="Disordered" evidence="3">
    <location>
        <begin position="76"/>
        <end position="114"/>
    </location>
</feature>
<feature type="region of interest" description="Disordered" evidence="3">
    <location>
        <begin position="170"/>
        <end position="221"/>
    </location>
</feature>
<feature type="region of interest" description="Disordered" evidence="3">
    <location>
        <begin position="329"/>
        <end position="385"/>
    </location>
</feature>
<feature type="region of interest" description="Disordered" evidence="3">
    <location>
        <begin position="473"/>
        <end position="502"/>
    </location>
</feature>
<feature type="region of interest" description="Disordered" evidence="3">
    <location>
        <begin position="533"/>
        <end position="589"/>
    </location>
</feature>
<feature type="region of interest" description="Disordered" evidence="3">
    <location>
        <begin position="640"/>
        <end position="678"/>
    </location>
</feature>
<feature type="region of interest" description="Disordered" evidence="3">
    <location>
        <begin position="1058"/>
        <end position="1080"/>
    </location>
</feature>
<feature type="compositionally biased region" description="Low complexity" evidence="3">
    <location>
        <begin position="79"/>
        <end position="100"/>
    </location>
</feature>
<feature type="compositionally biased region" description="Polar residues" evidence="3">
    <location>
        <begin position="194"/>
        <end position="207"/>
    </location>
</feature>
<feature type="compositionally biased region" description="Low complexity" evidence="3">
    <location>
        <begin position="208"/>
        <end position="219"/>
    </location>
</feature>
<feature type="compositionally biased region" description="Polar residues" evidence="3">
    <location>
        <begin position="344"/>
        <end position="353"/>
    </location>
</feature>
<feature type="compositionally biased region" description="Low complexity" evidence="3">
    <location>
        <begin position="482"/>
        <end position="502"/>
    </location>
</feature>
<feature type="compositionally biased region" description="Low complexity" evidence="3">
    <location>
        <begin position="535"/>
        <end position="580"/>
    </location>
</feature>
<feature type="compositionally biased region" description="Low complexity" evidence="3">
    <location>
        <begin position="641"/>
        <end position="652"/>
    </location>
</feature>
<feature type="compositionally biased region" description="Pro residues" evidence="3">
    <location>
        <begin position="653"/>
        <end position="672"/>
    </location>
</feature>
<feature type="compositionally biased region" description="Basic and acidic residues" evidence="3">
    <location>
        <begin position="1068"/>
        <end position="1080"/>
    </location>
</feature>